<keyword id="KW-0614">Plasmid</keyword>
<sequence>MAKQTLPYPPGFVEPTTGRVAVMVREYADSDLNGDAPAYWYSAQSEEWGLDPWRLVEGVDPHVGGGSFDVCFASGGTRTVGPLMTFFLSAAHAAQLIDAKGEELALQRATLAVIADGLGLPAKALRIEAKVEGRPAVFYDQDGATLCACAVDSDHWRQARATAATASAIDKARTNF</sequence>
<reference key="1">
    <citation type="journal article" date="1995" name="Microbiology">
        <title>Evolution of the korA-oriV segment of promiscuous IncP plasmids.</title>
        <authorList>
            <person name="Thomas C.M."/>
            <person name="Smith C.A."/>
            <person name="Ibbotson J.P."/>
            <person name="Johnston L."/>
            <person name="Wang N."/>
        </authorList>
    </citation>
    <scope>NUCLEOTIDE SEQUENCE [GENOMIC DNA]</scope>
</reference>
<reference key="2">
    <citation type="submission" date="2001-07" db="EMBL/GenBank/DDBJ databases">
        <authorList>
            <person name="Haines A.S."/>
            <person name="Thomas C.M."/>
        </authorList>
    </citation>
    <scope>SEQUENCE REVISION TO 65; 67; 75-79 AND C-TERMINUS</scope>
</reference>
<geneLocation type="plasmid">
    <name>IncP-beta R751</name>
</geneLocation>
<feature type="chain" id="PRO_0000068373" description="Protein KleF">
    <location>
        <begin position="1"/>
        <end position="176"/>
    </location>
</feature>
<proteinExistence type="predicted"/>
<name>KLEF1_ECOLX</name>
<dbReference type="EMBL" id="U67194">
    <property type="protein sequence ID" value="AAC64424.2"/>
    <property type="molecule type" value="Genomic_DNA"/>
</dbReference>
<dbReference type="RefSeq" id="WP_010890112.1">
    <property type="nucleotide sequence ID" value="NZ_JBEEEK010000035.1"/>
</dbReference>
<dbReference type="InterPro" id="IPR024249">
    <property type="entry name" value="DUF2761"/>
</dbReference>
<dbReference type="Pfam" id="PF10959">
    <property type="entry name" value="DUF2761"/>
    <property type="match status" value="1"/>
</dbReference>
<protein>
    <recommendedName>
        <fullName>Protein KleF</fullName>
    </recommendedName>
    <alternativeName>
        <fullName>KcrB4 protein</fullName>
    </alternativeName>
</protein>
<organism>
    <name type="scientific">Escherichia coli</name>
    <dbReference type="NCBI Taxonomy" id="562"/>
    <lineage>
        <taxon>Bacteria</taxon>
        <taxon>Pseudomonadati</taxon>
        <taxon>Pseudomonadota</taxon>
        <taxon>Gammaproteobacteria</taxon>
        <taxon>Enterobacterales</taxon>
        <taxon>Enterobacteriaceae</taxon>
        <taxon>Escherichia</taxon>
    </lineage>
</organism>
<accession>Q52281</accession>
<gene>
    <name type="primary">kleF</name>
    <name type="synonym">kcrB4</name>
</gene>